<sequence length="128" mass="13641">MRFAIVVTGPAYGTQQASSAFQFAQALIADGHELSSVFFYREGVYNANQLTSPASDEFDLVRAWQQLNAQHGVALNICVAAALRRGVVDETEAGRLGLASSNLQQGFTLSGLGALAEASLTCDRVVQF</sequence>
<proteinExistence type="inferred from homology"/>
<feature type="chain" id="PRO_1000122860" description="Sulfurtransferase TusD">
    <location>
        <begin position="1"/>
        <end position="128"/>
    </location>
</feature>
<feature type="active site" description="Cysteine persulfide intermediate" evidence="1">
    <location>
        <position position="78"/>
    </location>
</feature>
<accession>B1X6J4</accession>
<evidence type="ECO:0000255" key="1">
    <source>
        <dbReference type="HAMAP-Rule" id="MF_00390"/>
    </source>
</evidence>
<organism>
    <name type="scientific">Escherichia coli (strain K12 / DH10B)</name>
    <dbReference type="NCBI Taxonomy" id="316385"/>
    <lineage>
        <taxon>Bacteria</taxon>
        <taxon>Pseudomonadati</taxon>
        <taxon>Pseudomonadota</taxon>
        <taxon>Gammaproteobacteria</taxon>
        <taxon>Enterobacterales</taxon>
        <taxon>Enterobacteriaceae</taxon>
        <taxon>Escherichia</taxon>
    </lineage>
</organism>
<keyword id="KW-0963">Cytoplasm</keyword>
<keyword id="KW-0808">Transferase</keyword>
<keyword id="KW-0819">tRNA processing</keyword>
<reference key="1">
    <citation type="journal article" date="2008" name="J. Bacteriol.">
        <title>The complete genome sequence of Escherichia coli DH10B: insights into the biology of a laboratory workhorse.</title>
        <authorList>
            <person name="Durfee T."/>
            <person name="Nelson R."/>
            <person name="Baldwin S."/>
            <person name="Plunkett G. III"/>
            <person name="Burland V."/>
            <person name="Mau B."/>
            <person name="Petrosino J.F."/>
            <person name="Qin X."/>
            <person name="Muzny D.M."/>
            <person name="Ayele M."/>
            <person name="Gibbs R.A."/>
            <person name="Csorgo B."/>
            <person name="Posfai G."/>
            <person name="Weinstock G.M."/>
            <person name="Blattner F.R."/>
        </authorList>
    </citation>
    <scope>NUCLEOTIDE SEQUENCE [LARGE SCALE GENOMIC DNA]</scope>
    <source>
        <strain>K12 / DH10B</strain>
    </source>
</reference>
<gene>
    <name evidence="1" type="primary">tusD</name>
    <name type="ordered locus">ECDH10B_3520</name>
</gene>
<protein>
    <recommendedName>
        <fullName evidence="1">Sulfurtransferase TusD</fullName>
        <ecNumber evidence="1">2.8.1.-</ecNumber>
    </recommendedName>
    <alternativeName>
        <fullName evidence="1">tRNA 2-thiouridine synthesizing protein D</fullName>
    </alternativeName>
</protein>
<dbReference type="EC" id="2.8.1.-" evidence="1"/>
<dbReference type="EMBL" id="CP000948">
    <property type="protein sequence ID" value="ACB04404.1"/>
    <property type="molecule type" value="Genomic_DNA"/>
</dbReference>
<dbReference type="RefSeq" id="WP_001209680.1">
    <property type="nucleotide sequence ID" value="NC_010473.1"/>
</dbReference>
<dbReference type="SMR" id="B1X6J4"/>
<dbReference type="KEGG" id="ecd:ECDH10B_3520"/>
<dbReference type="HOGENOM" id="CLU_132095_0_0_6"/>
<dbReference type="GO" id="GO:1990228">
    <property type="term" value="C:sulfurtransferase complex"/>
    <property type="evidence" value="ECO:0007669"/>
    <property type="project" value="TreeGrafter"/>
</dbReference>
<dbReference type="GO" id="GO:0097163">
    <property type="term" value="F:sulfur carrier activity"/>
    <property type="evidence" value="ECO:0007669"/>
    <property type="project" value="TreeGrafter"/>
</dbReference>
<dbReference type="GO" id="GO:0016783">
    <property type="term" value="F:sulfurtransferase activity"/>
    <property type="evidence" value="ECO:0007669"/>
    <property type="project" value="UniProtKB-UniRule"/>
</dbReference>
<dbReference type="GO" id="GO:0002143">
    <property type="term" value="P:tRNA wobble position uridine thiolation"/>
    <property type="evidence" value="ECO:0007669"/>
    <property type="project" value="TreeGrafter"/>
</dbReference>
<dbReference type="FunFam" id="3.40.1260.10:FF:000001">
    <property type="entry name" value="Sulfurtransferase TusD"/>
    <property type="match status" value="1"/>
</dbReference>
<dbReference type="Gene3D" id="3.40.1260.10">
    <property type="entry name" value="DsrEFH-like"/>
    <property type="match status" value="1"/>
</dbReference>
<dbReference type="HAMAP" id="MF_00390">
    <property type="entry name" value="Thiourid_synth_D"/>
    <property type="match status" value="1"/>
</dbReference>
<dbReference type="InterPro" id="IPR027396">
    <property type="entry name" value="DsrEFH-like"/>
</dbReference>
<dbReference type="InterPro" id="IPR003787">
    <property type="entry name" value="Sulphur_relay_DsrE/F-like"/>
</dbReference>
<dbReference type="InterPro" id="IPR017463">
    <property type="entry name" value="Sulphur_relay_TusD/DsrE"/>
</dbReference>
<dbReference type="NCBIfam" id="NF001237">
    <property type="entry name" value="PRK00207.1"/>
    <property type="match status" value="1"/>
</dbReference>
<dbReference type="NCBIfam" id="TIGR03012">
    <property type="entry name" value="sulf_tusD_dsrE"/>
    <property type="match status" value="1"/>
</dbReference>
<dbReference type="PANTHER" id="PTHR34874">
    <property type="entry name" value="PROTEIN YCHN"/>
    <property type="match status" value="1"/>
</dbReference>
<dbReference type="PANTHER" id="PTHR34874:SF3">
    <property type="entry name" value="SULFURTRANSFERASE TUSD"/>
    <property type="match status" value="1"/>
</dbReference>
<dbReference type="Pfam" id="PF02635">
    <property type="entry name" value="DsrE"/>
    <property type="match status" value="1"/>
</dbReference>
<dbReference type="SUPFAM" id="SSF75169">
    <property type="entry name" value="DsrEFH-like"/>
    <property type="match status" value="1"/>
</dbReference>
<comment type="function">
    <text evidence="1">Part of a sulfur-relay system required for 2-thiolation of 5-methylaminomethyl-2-thiouridine (mnm(5)s(2)U) at tRNA wobble positions. Accepts sulfur from TusA and transfers it in turn to TusE.</text>
</comment>
<comment type="subunit">
    <text evidence="1">Heterohexamer, formed by a dimer of trimers. The hexameric TusBCD complex contains 2 copies each of TusB, TusC and TusD. The TusBCD complex interacts with TusE.</text>
</comment>
<comment type="subcellular location">
    <subcellularLocation>
        <location evidence="1">Cytoplasm</location>
    </subcellularLocation>
</comment>
<comment type="similarity">
    <text evidence="1">Belongs to the DsrE/TusD family.</text>
</comment>
<name>TUSD_ECODH</name>